<sequence>MPSLKDLRNRIASVKATQKITKAMQMVAAAKLRRAQEAAEAARPYSQRMGAVLANIAQNVSGEDAPALMVGTGKDDVHLLVVCTAKRGLCGGFNSQIARLARDHARKLLAEGKTVKIITVGKKGADILRREFSALLHDHVDLREVKQLAFVHADQIGHKIIKLFEEGAFDVCTLFYSEFKSVISQVSTAQQLIPASADNEAEMETAGDAIYEYEPDPAAILSTLIPRNISVQIFRALLENVAGEMGAKMSAMDNATRNAGDMINKLSITYNRQRQAQITKELIEIISGAEAL</sequence>
<proteinExistence type="inferred from homology"/>
<dbReference type="EMBL" id="AM040264">
    <property type="protein sequence ID" value="CAJ11764.1"/>
    <property type="molecule type" value="Genomic_DNA"/>
</dbReference>
<dbReference type="RefSeq" id="WP_002964877.1">
    <property type="nucleotide sequence ID" value="NZ_KN046823.1"/>
</dbReference>
<dbReference type="SMR" id="Q2YLI6"/>
<dbReference type="STRING" id="359391.BAB1_1808"/>
<dbReference type="KEGG" id="bmf:BAB1_1808"/>
<dbReference type="PATRIC" id="fig|359391.11.peg.318"/>
<dbReference type="HOGENOM" id="CLU_050669_0_1_5"/>
<dbReference type="PhylomeDB" id="Q2YLI6"/>
<dbReference type="Proteomes" id="UP000002719">
    <property type="component" value="Chromosome I"/>
</dbReference>
<dbReference type="GO" id="GO:0005886">
    <property type="term" value="C:plasma membrane"/>
    <property type="evidence" value="ECO:0007669"/>
    <property type="project" value="UniProtKB-SubCell"/>
</dbReference>
<dbReference type="GO" id="GO:0045259">
    <property type="term" value="C:proton-transporting ATP synthase complex"/>
    <property type="evidence" value="ECO:0007669"/>
    <property type="project" value="UniProtKB-KW"/>
</dbReference>
<dbReference type="GO" id="GO:0005524">
    <property type="term" value="F:ATP binding"/>
    <property type="evidence" value="ECO:0007669"/>
    <property type="project" value="UniProtKB-UniRule"/>
</dbReference>
<dbReference type="GO" id="GO:0046933">
    <property type="term" value="F:proton-transporting ATP synthase activity, rotational mechanism"/>
    <property type="evidence" value="ECO:0007669"/>
    <property type="project" value="UniProtKB-UniRule"/>
</dbReference>
<dbReference type="GO" id="GO:0042777">
    <property type="term" value="P:proton motive force-driven plasma membrane ATP synthesis"/>
    <property type="evidence" value="ECO:0007669"/>
    <property type="project" value="UniProtKB-UniRule"/>
</dbReference>
<dbReference type="CDD" id="cd12151">
    <property type="entry name" value="F1-ATPase_gamma"/>
    <property type="match status" value="1"/>
</dbReference>
<dbReference type="FunFam" id="1.10.287.80:FF:000001">
    <property type="entry name" value="ATP synthase gamma chain"/>
    <property type="match status" value="1"/>
</dbReference>
<dbReference type="FunFam" id="1.10.287.80:FF:000003">
    <property type="entry name" value="ATP synthase gamma chain, chloroplastic"/>
    <property type="match status" value="1"/>
</dbReference>
<dbReference type="Gene3D" id="3.40.1380.10">
    <property type="match status" value="1"/>
</dbReference>
<dbReference type="Gene3D" id="1.10.287.80">
    <property type="entry name" value="ATP synthase, gamma subunit, helix hairpin domain"/>
    <property type="match status" value="1"/>
</dbReference>
<dbReference type="HAMAP" id="MF_00815">
    <property type="entry name" value="ATP_synth_gamma_bact"/>
    <property type="match status" value="1"/>
</dbReference>
<dbReference type="InterPro" id="IPR035968">
    <property type="entry name" value="ATP_synth_F1_ATPase_gsu"/>
</dbReference>
<dbReference type="InterPro" id="IPR000131">
    <property type="entry name" value="ATP_synth_F1_gsu"/>
</dbReference>
<dbReference type="InterPro" id="IPR023632">
    <property type="entry name" value="ATP_synth_F1_gsu_CS"/>
</dbReference>
<dbReference type="NCBIfam" id="TIGR01146">
    <property type="entry name" value="ATPsyn_F1gamma"/>
    <property type="match status" value="1"/>
</dbReference>
<dbReference type="NCBIfam" id="NF004146">
    <property type="entry name" value="PRK05621.1-4"/>
    <property type="match status" value="1"/>
</dbReference>
<dbReference type="PANTHER" id="PTHR11693">
    <property type="entry name" value="ATP SYNTHASE GAMMA CHAIN"/>
    <property type="match status" value="1"/>
</dbReference>
<dbReference type="PANTHER" id="PTHR11693:SF22">
    <property type="entry name" value="ATP SYNTHASE SUBUNIT GAMMA, MITOCHONDRIAL"/>
    <property type="match status" value="1"/>
</dbReference>
<dbReference type="Pfam" id="PF00231">
    <property type="entry name" value="ATP-synt"/>
    <property type="match status" value="1"/>
</dbReference>
<dbReference type="PIRSF" id="PIRSF039089">
    <property type="entry name" value="ATP_synthase_gamma"/>
    <property type="match status" value="1"/>
</dbReference>
<dbReference type="PRINTS" id="PR00126">
    <property type="entry name" value="ATPASEGAMMA"/>
</dbReference>
<dbReference type="SUPFAM" id="SSF52943">
    <property type="entry name" value="ATP synthase (F1-ATPase), gamma subunit"/>
    <property type="match status" value="1"/>
</dbReference>
<dbReference type="PROSITE" id="PS00153">
    <property type="entry name" value="ATPASE_GAMMA"/>
    <property type="match status" value="1"/>
</dbReference>
<evidence type="ECO:0000255" key="1">
    <source>
        <dbReference type="HAMAP-Rule" id="MF_00815"/>
    </source>
</evidence>
<name>ATPG_BRUA2</name>
<keyword id="KW-0066">ATP synthesis</keyword>
<keyword id="KW-0997">Cell inner membrane</keyword>
<keyword id="KW-1003">Cell membrane</keyword>
<keyword id="KW-0139">CF(1)</keyword>
<keyword id="KW-0375">Hydrogen ion transport</keyword>
<keyword id="KW-0406">Ion transport</keyword>
<keyword id="KW-0472">Membrane</keyword>
<keyword id="KW-1185">Reference proteome</keyword>
<keyword id="KW-0813">Transport</keyword>
<comment type="function">
    <text evidence="1">Produces ATP from ADP in the presence of a proton gradient across the membrane. The gamma chain is believed to be important in regulating ATPase activity and the flow of protons through the CF(0) complex.</text>
</comment>
<comment type="subunit">
    <text evidence="1">F-type ATPases have 2 components, CF(1) - the catalytic core - and CF(0) - the membrane proton channel. CF(1) has five subunits: alpha(3), beta(3), gamma(1), delta(1), epsilon(1). CF(0) has three main subunits: a, b and c.</text>
</comment>
<comment type="subcellular location">
    <subcellularLocation>
        <location evidence="1">Cell inner membrane</location>
        <topology evidence="1">Peripheral membrane protein</topology>
    </subcellularLocation>
</comment>
<comment type="similarity">
    <text evidence="1">Belongs to the ATPase gamma chain family.</text>
</comment>
<feature type="chain" id="PRO_1000053166" description="ATP synthase gamma chain">
    <location>
        <begin position="1"/>
        <end position="292"/>
    </location>
</feature>
<reference key="1">
    <citation type="journal article" date="2005" name="Infect. Immun.">
        <title>Whole-genome analyses of speciation events in pathogenic Brucellae.</title>
        <authorList>
            <person name="Chain P.S."/>
            <person name="Comerci D.J."/>
            <person name="Tolmasky M.E."/>
            <person name="Larimer F.W."/>
            <person name="Malfatti S.A."/>
            <person name="Vergez L.M."/>
            <person name="Aguero F."/>
            <person name="Land M.L."/>
            <person name="Ugalde R.A."/>
            <person name="Garcia E."/>
        </authorList>
    </citation>
    <scope>NUCLEOTIDE SEQUENCE [LARGE SCALE GENOMIC DNA]</scope>
    <source>
        <strain>2308</strain>
    </source>
</reference>
<organism>
    <name type="scientific">Brucella abortus (strain 2308)</name>
    <dbReference type="NCBI Taxonomy" id="359391"/>
    <lineage>
        <taxon>Bacteria</taxon>
        <taxon>Pseudomonadati</taxon>
        <taxon>Pseudomonadota</taxon>
        <taxon>Alphaproteobacteria</taxon>
        <taxon>Hyphomicrobiales</taxon>
        <taxon>Brucellaceae</taxon>
        <taxon>Brucella/Ochrobactrum group</taxon>
        <taxon>Brucella</taxon>
    </lineage>
</organism>
<gene>
    <name evidence="1" type="primary">atpG</name>
    <name type="ordered locus">BAB1_1808</name>
</gene>
<accession>Q2YLI6</accession>
<protein>
    <recommendedName>
        <fullName evidence="1">ATP synthase gamma chain</fullName>
    </recommendedName>
    <alternativeName>
        <fullName evidence="1">ATP synthase F1 sector gamma subunit</fullName>
    </alternativeName>
    <alternativeName>
        <fullName evidence="1">F-ATPase gamma subunit</fullName>
    </alternativeName>
</protein>